<dbReference type="EC" id="7.6.2.14" evidence="1"/>
<dbReference type="EMBL" id="AE008692">
    <property type="protein sequence ID" value="AAV89887.1"/>
    <property type="molecule type" value="Genomic_DNA"/>
</dbReference>
<dbReference type="RefSeq" id="WP_011241071.1">
    <property type="nucleotide sequence ID" value="NZ_CP035711.1"/>
</dbReference>
<dbReference type="SMR" id="Q5NN23"/>
<dbReference type="STRING" id="264203.ZMO1263"/>
<dbReference type="KEGG" id="zmo:ZMO1263"/>
<dbReference type="eggNOG" id="COG1116">
    <property type="taxonomic scope" value="Bacteria"/>
</dbReference>
<dbReference type="HOGENOM" id="CLU_000604_1_22_5"/>
<dbReference type="Proteomes" id="UP000001173">
    <property type="component" value="Chromosome"/>
</dbReference>
<dbReference type="GO" id="GO:0005886">
    <property type="term" value="C:plasma membrane"/>
    <property type="evidence" value="ECO:0007669"/>
    <property type="project" value="UniProtKB-SubCell"/>
</dbReference>
<dbReference type="GO" id="GO:0005524">
    <property type="term" value="F:ATP binding"/>
    <property type="evidence" value="ECO:0007669"/>
    <property type="project" value="UniProtKB-KW"/>
</dbReference>
<dbReference type="GO" id="GO:0016887">
    <property type="term" value="F:ATP hydrolysis activity"/>
    <property type="evidence" value="ECO:0007669"/>
    <property type="project" value="InterPro"/>
</dbReference>
<dbReference type="CDD" id="cd03293">
    <property type="entry name" value="ABC_NrtD_SsuB_transporters"/>
    <property type="match status" value="1"/>
</dbReference>
<dbReference type="Gene3D" id="3.40.50.300">
    <property type="entry name" value="P-loop containing nucleotide triphosphate hydrolases"/>
    <property type="match status" value="1"/>
</dbReference>
<dbReference type="InterPro" id="IPR003593">
    <property type="entry name" value="AAA+_ATPase"/>
</dbReference>
<dbReference type="InterPro" id="IPR003439">
    <property type="entry name" value="ABC_transporter-like_ATP-bd"/>
</dbReference>
<dbReference type="InterPro" id="IPR017871">
    <property type="entry name" value="ABC_transporter-like_CS"/>
</dbReference>
<dbReference type="InterPro" id="IPR050166">
    <property type="entry name" value="ABC_transporter_ATP-bind"/>
</dbReference>
<dbReference type="InterPro" id="IPR027417">
    <property type="entry name" value="P-loop_NTPase"/>
</dbReference>
<dbReference type="PANTHER" id="PTHR42788:SF17">
    <property type="entry name" value="ALIPHATIC SULFONATES IMPORT ATP-BINDING PROTEIN SSUB"/>
    <property type="match status" value="1"/>
</dbReference>
<dbReference type="PANTHER" id="PTHR42788">
    <property type="entry name" value="TAURINE IMPORT ATP-BINDING PROTEIN-RELATED"/>
    <property type="match status" value="1"/>
</dbReference>
<dbReference type="Pfam" id="PF00005">
    <property type="entry name" value="ABC_tran"/>
    <property type="match status" value="1"/>
</dbReference>
<dbReference type="SMART" id="SM00382">
    <property type="entry name" value="AAA"/>
    <property type="match status" value="1"/>
</dbReference>
<dbReference type="SUPFAM" id="SSF52540">
    <property type="entry name" value="P-loop containing nucleoside triphosphate hydrolases"/>
    <property type="match status" value="1"/>
</dbReference>
<dbReference type="PROSITE" id="PS00211">
    <property type="entry name" value="ABC_TRANSPORTER_1"/>
    <property type="match status" value="1"/>
</dbReference>
<dbReference type="PROSITE" id="PS50893">
    <property type="entry name" value="ABC_TRANSPORTER_2"/>
    <property type="match status" value="1"/>
</dbReference>
<dbReference type="PROSITE" id="PS51291">
    <property type="entry name" value="SSUB"/>
    <property type="match status" value="1"/>
</dbReference>
<gene>
    <name evidence="1" type="primary">ssuB</name>
    <name type="ordered locus">ZMO1263</name>
</gene>
<organism>
    <name type="scientific">Zymomonas mobilis subsp. mobilis (strain ATCC 31821 / ZM4 / CP4)</name>
    <dbReference type="NCBI Taxonomy" id="264203"/>
    <lineage>
        <taxon>Bacteria</taxon>
        <taxon>Pseudomonadati</taxon>
        <taxon>Pseudomonadota</taxon>
        <taxon>Alphaproteobacteria</taxon>
        <taxon>Sphingomonadales</taxon>
        <taxon>Zymomonadaceae</taxon>
        <taxon>Zymomonas</taxon>
    </lineage>
</organism>
<accession>Q5NN23</accession>
<proteinExistence type="inferred from homology"/>
<protein>
    <recommendedName>
        <fullName evidence="1">Aliphatic sulfonates import ATP-binding protein SsuB</fullName>
        <ecNumber evidence="1">7.6.2.14</ecNumber>
    </recommendedName>
</protein>
<comment type="function">
    <text evidence="1">Part of the ABC transporter complex SsuABC involved in aliphatic sulfonates import. Responsible for energy coupling to the transport system.</text>
</comment>
<comment type="catalytic activity">
    <reaction evidence="1">
        <text>ATP + H2O + aliphatic sulfonate-[sulfonate-binding protein]Side 1 = ADP + phosphate + aliphatic sulfonateSide 2 + [sulfonate-binding protein]Side 1.</text>
        <dbReference type="EC" id="7.6.2.14"/>
    </reaction>
</comment>
<comment type="subunit">
    <text evidence="1">The complex is composed of two ATP-binding proteins (SsuB), two transmembrane proteins (SsuC) and a solute-binding protein (SsuA).</text>
</comment>
<comment type="subcellular location">
    <subcellularLocation>
        <location evidence="1">Cell inner membrane</location>
        <topology evidence="1">Peripheral membrane protein</topology>
    </subcellularLocation>
</comment>
<comment type="similarity">
    <text evidence="1">Belongs to the ABC transporter superfamily. Aliphatic sulfonates importer (TC 3.A.1.17.2) family.</text>
</comment>
<keyword id="KW-0067">ATP-binding</keyword>
<keyword id="KW-0997">Cell inner membrane</keyword>
<keyword id="KW-1003">Cell membrane</keyword>
<keyword id="KW-0472">Membrane</keyword>
<keyword id="KW-0547">Nucleotide-binding</keyword>
<keyword id="KW-1185">Reference proteome</keyword>
<keyword id="KW-1278">Translocase</keyword>
<keyword id="KW-0813">Transport</keyword>
<evidence type="ECO:0000255" key="1">
    <source>
        <dbReference type="HAMAP-Rule" id="MF_01724"/>
    </source>
</evidence>
<reference key="1">
    <citation type="journal article" date="2005" name="Nat. Biotechnol.">
        <title>The genome sequence of the ethanologenic bacterium Zymomonas mobilis ZM4.</title>
        <authorList>
            <person name="Seo J.-S."/>
            <person name="Chong H."/>
            <person name="Park H.S."/>
            <person name="Yoon K.-O."/>
            <person name="Jung C."/>
            <person name="Kim J.J."/>
            <person name="Hong J.H."/>
            <person name="Kim H."/>
            <person name="Kim J.-H."/>
            <person name="Kil J.-I."/>
            <person name="Park C.J."/>
            <person name="Oh H.-M."/>
            <person name="Lee J.-S."/>
            <person name="Jin S.-J."/>
            <person name="Um H.-W."/>
            <person name="Lee H.-J."/>
            <person name="Oh S.-J."/>
            <person name="Kim J.Y."/>
            <person name="Kang H.L."/>
            <person name="Lee S.Y."/>
            <person name="Lee K.J."/>
            <person name="Kang H.S."/>
        </authorList>
    </citation>
    <scope>NUCLEOTIDE SEQUENCE [LARGE SCALE GENOMIC DNA]</scope>
    <source>
        <strain>ATCC 31821 / ZM4 / CP4</strain>
    </source>
</reference>
<sequence length="240" mass="27296">MEKISIQLSKLRKNFGTVEVLKDVDIAIPEGQFVALVGESGCGKSTLLRLISHLERPTSGQLLIDGKERRKINPSVRYLFQEARLLPWRSVLDNVRLGAKDRDKKTARESLESVNLLDKENEWPEILSGGQCQRVSLARALAGKPKILLLDEPLGALDALTRVQMQKLIESLWLEQKFTVLLVTHDVSEAVYLADRVIALEKGQIGLDREIPLPRPRVKDRHFACFENEILNFIMKNYYI</sequence>
<feature type="chain" id="PRO_0000279971" description="Aliphatic sulfonates import ATP-binding protein SsuB">
    <location>
        <begin position="1"/>
        <end position="240"/>
    </location>
</feature>
<feature type="domain" description="ABC transporter" evidence="1">
    <location>
        <begin position="6"/>
        <end position="227"/>
    </location>
</feature>
<feature type="binding site" evidence="1">
    <location>
        <begin position="38"/>
        <end position="45"/>
    </location>
    <ligand>
        <name>ATP</name>
        <dbReference type="ChEBI" id="CHEBI:30616"/>
    </ligand>
</feature>
<name>SSUB_ZYMMO</name>